<sequence length="738" mass="83927">MPLSRSLSVSSLPGLEDWEDEFDPENAVLFEVAWEVANKVGGIYTVLQTKAKVTGDEWGDNYYLVGPYTEQGVRTQVELLEPPTPELKRTLDSMNSKGCKVYFGRWLIEGGPLVVLLDVGASAWALERWKGELWDTCNIGVPWYDREANDAVLFGFLTTWFLGEFLAQNEEKPYVVAHFHEWLAGVGLCLCRARRLPVATIFTTHATLLGRYLCAGAVDFYNNLENFNVDKEAGERQIYHRYCMERAAAHCAHVFTTVSQITAIEAQHLLKRKPDIVTPNGLNVKKFSAMHEFQNLHAQSKARIQEFVRGHFYGHLDFNLDKTLYFFIAGRYEFSNKGADVFLEALARLNYLLRVNGSEQTVVAFFIMPARTNNFNVETLKGQAVRKQLWDTANTVKEKFGRKLYESLLVGSLPDMNKMLDKEDFTMMKRAIFATQRQSFPPVCTHNMLDDSSDPILTTIRRIGLFNSSADRVKVIFHPEFLSSTSPLLPVDYEEFVRGCHLGVFPSYYEPWGYTPAECTVMGIPSISTNLSGFGCFMEEHIADPSAYGIYILDRRFRSLDDSCSQLTSFLYSFCQQSRRQRIIQRNRTERLSDLLDWKYLGRYYMSARHMALAKAFPDHFTYEPHEVDATQGYRYPRPASVPPSPSLSRHSSPHQSEDEEEPRDGPLGEDSERYDEEEEAAKDRRNIRAPEWPRRASCSSSTGGSKRSNSVDTGPSSSLSTPTEPLSPTSSLGEERN</sequence>
<evidence type="ECO:0000250" key="1"/>
<evidence type="ECO:0000250" key="2">
    <source>
        <dbReference type="UniProtKB" id="A2RRU1"/>
    </source>
</evidence>
<evidence type="ECO:0000250" key="3">
    <source>
        <dbReference type="UniProtKB" id="P13807"/>
    </source>
</evidence>
<evidence type="ECO:0000250" key="4">
    <source>
        <dbReference type="UniProtKB" id="P13834"/>
    </source>
</evidence>
<evidence type="ECO:0000250" key="5">
    <source>
        <dbReference type="UniProtKB" id="P54840"/>
    </source>
</evidence>
<evidence type="ECO:0000256" key="6">
    <source>
        <dbReference type="SAM" id="MobiDB-lite"/>
    </source>
</evidence>
<evidence type="ECO:0000269" key="7">
    <source>
    </source>
</evidence>
<evidence type="ECO:0000305" key="8"/>
<evidence type="ECO:0007744" key="9">
    <source>
    </source>
</evidence>
<organism>
    <name type="scientific">Mus musculus</name>
    <name type="common">Mouse</name>
    <dbReference type="NCBI Taxonomy" id="10090"/>
    <lineage>
        <taxon>Eukaryota</taxon>
        <taxon>Metazoa</taxon>
        <taxon>Chordata</taxon>
        <taxon>Craniata</taxon>
        <taxon>Vertebrata</taxon>
        <taxon>Euteleostomi</taxon>
        <taxon>Mammalia</taxon>
        <taxon>Eutheria</taxon>
        <taxon>Euarchontoglires</taxon>
        <taxon>Glires</taxon>
        <taxon>Rodentia</taxon>
        <taxon>Myomorpha</taxon>
        <taxon>Muroidea</taxon>
        <taxon>Muridae</taxon>
        <taxon>Murinae</taxon>
        <taxon>Mus</taxon>
        <taxon>Mus</taxon>
    </lineage>
</organism>
<dbReference type="EC" id="2.4.1.11" evidence="3"/>
<dbReference type="EMBL" id="X94616">
    <property type="protein sequence ID" value="CAA64322.1"/>
    <property type="molecule type" value="mRNA"/>
</dbReference>
<dbReference type="EMBL" id="U53218">
    <property type="protein sequence ID" value="AAD09457.1"/>
    <property type="molecule type" value="mRNA"/>
</dbReference>
<dbReference type="EMBL" id="AK050813">
    <property type="protein sequence ID" value="BAC34420.1"/>
    <property type="molecule type" value="mRNA"/>
</dbReference>
<dbReference type="EMBL" id="AK171148">
    <property type="protein sequence ID" value="BAE42275.1"/>
    <property type="molecule type" value="mRNA"/>
</dbReference>
<dbReference type="EMBL" id="CH466603">
    <property type="protein sequence ID" value="EDL22855.1"/>
    <property type="molecule type" value="Genomic_DNA"/>
</dbReference>
<dbReference type="EMBL" id="BC019389">
    <property type="protein sequence ID" value="AAH19389.1"/>
    <property type="molecule type" value="mRNA"/>
</dbReference>
<dbReference type="EMBL" id="BC131687">
    <property type="protein sequence ID" value="AAI31688.1"/>
    <property type="molecule type" value="mRNA"/>
</dbReference>
<dbReference type="EMBL" id="BC131688">
    <property type="protein sequence ID" value="AAI31689.1"/>
    <property type="molecule type" value="mRNA"/>
</dbReference>
<dbReference type="EMBL" id="BC152550">
    <property type="protein sequence ID" value="AAI52551.1"/>
    <property type="molecule type" value="mRNA"/>
</dbReference>
<dbReference type="CCDS" id="CCDS21244.1"/>
<dbReference type="RefSeq" id="NP_109603.2">
    <property type="nucleotide sequence ID" value="NM_030678.3"/>
</dbReference>
<dbReference type="SMR" id="Q9Z1E4"/>
<dbReference type="BioGRID" id="200132">
    <property type="interactions" value="18"/>
</dbReference>
<dbReference type="FunCoup" id="Q9Z1E4">
    <property type="interactions" value="1722"/>
</dbReference>
<dbReference type="IntAct" id="Q9Z1E4">
    <property type="interactions" value="4"/>
</dbReference>
<dbReference type="MINT" id="Q9Z1E4"/>
<dbReference type="STRING" id="10090.ENSMUSP00000003964"/>
<dbReference type="CAZy" id="GT3">
    <property type="family name" value="Glycosyltransferase Family 3"/>
</dbReference>
<dbReference type="iPTMnet" id="Q9Z1E4"/>
<dbReference type="PhosphoSitePlus" id="Q9Z1E4"/>
<dbReference type="SwissPalm" id="Q9Z1E4"/>
<dbReference type="jPOST" id="Q9Z1E4"/>
<dbReference type="PaxDb" id="10090-ENSMUSP00000003964"/>
<dbReference type="PeptideAtlas" id="Q9Z1E4"/>
<dbReference type="ProteomicsDB" id="271352"/>
<dbReference type="Pumba" id="Q9Z1E4"/>
<dbReference type="Antibodypedia" id="3582">
    <property type="antibodies" value="422 antibodies from 41 providers"/>
</dbReference>
<dbReference type="DNASU" id="14936"/>
<dbReference type="Ensembl" id="ENSMUST00000003964.17">
    <property type="protein sequence ID" value="ENSMUSP00000003964.9"/>
    <property type="gene ID" value="ENSMUSG00000003865.17"/>
</dbReference>
<dbReference type="GeneID" id="14936"/>
<dbReference type="KEGG" id="mmu:14936"/>
<dbReference type="UCSC" id="uc009gve.1">
    <property type="organism name" value="mouse"/>
</dbReference>
<dbReference type="AGR" id="MGI:101805"/>
<dbReference type="CTD" id="2997"/>
<dbReference type="MGI" id="MGI:101805">
    <property type="gene designation" value="Gys1"/>
</dbReference>
<dbReference type="VEuPathDB" id="HostDB:ENSMUSG00000003865"/>
<dbReference type="eggNOG" id="KOG3742">
    <property type="taxonomic scope" value="Eukaryota"/>
</dbReference>
<dbReference type="GeneTree" id="ENSGT00390000018612"/>
<dbReference type="InParanoid" id="Q9Z1E4"/>
<dbReference type="OMA" id="RDVRNHI"/>
<dbReference type="OrthoDB" id="6335297at2759"/>
<dbReference type="PhylomeDB" id="Q9Z1E4"/>
<dbReference type="TreeFam" id="TF300306"/>
<dbReference type="Reactome" id="R-MMU-3322077">
    <property type="pathway name" value="Glycogen synthesis"/>
</dbReference>
<dbReference type="UniPathway" id="UPA00164"/>
<dbReference type="BioGRID-ORCS" id="14936">
    <property type="hits" value="5 hits in 77 CRISPR screens"/>
</dbReference>
<dbReference type="ChiTaRS" id="Gys1">
    <property type="organism name" value="mouse"/>
</dbReference>
<dbReference type="PRO" id="PR:Q9Z1E4"/>
<dbReference type="Proteomes" id="UP000000589">
    <property type="component" value="Chromosome 7"/>
</dbReference>
<dbReference type="RNAct" id="Q9Z1E4">
    <property type="molecule type" value="protein"/>
</dbReference>
<dbReference type="Bgee" id="ENSMUSG00000003865">
    <property type="expression patterns" value="Expressed in plantaris and 263 other cell types or tissues"/>
</dbReference>
<dbReference type="ExpressionAtlas" id="Q9Z1E4">
    <property type="expression patterns" value="baseline and differential"/>
</dbReference>
<dbReference type="GO" id="GO:0005737">
    <property type="term" value="C:cytoplasm"/>
    <property type="evidence" value="ECO:0000314"/>
    <property type="project" value="MGI"/>
</dbReference>
<dbReference type="GO" id="GO:0005829">
    <property type="term" value="C:cytosol"/>
    <property type="evidence" value="ECO:0000314"/>
    <property type="project" value="MGI"/>
</dbReference>
<dbReference type="GO" id="GO:0016234">
    <property type="term" value="C:inclusion body"/>
    <property type="evidence" value="ECO:0000314"/>
    <property type="project" value="MGI"/>
</dbReference>
<dbReference type="GO" id="GO:0004373">
    <property type="term" value="F:alpha-1,4-glucan glucosyltransferase (UDP-glucose donor) activity"/>
    <property type="evidence" value="ECO:0000314"/>
    <property type="project" value="MGI"/>
</dbReference>
<dbReference type="GO" id="GO:0005536">
    <property type="term" value="F:D-glucose binding"/>
    <property type="evidence" value="ECO:0007669"/>
    <property type="project" value="Ensembl"/>
</dbReference>
<dbReference type="GO" id="GO:0061547">
    <property type="term" value="F:glycogen synthase activity, transferring glucose-1-phosphate"/>
    <property type="evidence" value="ECO:0000314"/>
    <property type="project" value="MGI"/>
</dbReference>
<dbReference type="GO" id="GO:0005978">
    <property type="term" value="P:glycogen biosynthetic process"/>
    <property type="evidence" value="ECO:0000314"/>
    <property type="project" value="MGI"/>
</dbReference>
<dbReference type="GO" id="GO:0007507">
    <property type="term" value="P:heart development"/>
    <property type="evidence" value="ECO:0000315"/>
    <property type="project" value="MGI"/>
</dbReference>
<dbReference type="CDD" id="cd03793">
    <property type="entry name" value="GT3_GSY2-like"/>
    <property type="match status" value="1"/>
</dbReference>
<dbReference type="FunFam" id="3.40.50.2000:FF:000014">
    <property type="entry name" value="Glycogen [starch] synthase"/>
    <property type="match status" value="1"/>
</dbReference>
<dbReference type="FunFam" id="3.40.50.2000:FF:000028">
    <property type="entry name" value="Glycogen [starch] synthase"/>
    <property type="match status" value="1"/>
</dbReference>
<dbReference type="Gene3D" id="3.40.50.2000">
    <property type="entry name" value="Glycogen Phosphorylase B"/>
    <property type="match status" value="2"/>
</dbReference>
<dbReference type="InterPro" id="IPR008631">
    <property type="entry name" value="Glycogen_synth"/>
</dbReference>
<dbReference type="PANTHER" id="PTHR10176:SF2">
    <property type="entry name" value="GLYCOGEN [STARCH] SYNTHASE, MUSCLE"/>
    <property type="match status" value="1"/>
</dbReference>
<dbReference type="PANTHER" id="PTHR10176">
    <property type="entry name" value="GLYCOGEN SYNTHASE"/>
    <property type="match status" value="1"/>
</dbReference>
<dbReference type="Pfam" id="PF05693">
    <property type="entry name" value="Glycogen_syn"/>
    <property type="match status" value="1"/>
</dbReference>
<dbReference type="SUPFAM" id="SSF53756">
    <property type="entry name" value="UDP-Glycosyltransferase/glycogen phosphorylase"/>
    <property type="match status" value="2"/>
</dbReference>
<feature type="chain" id="PRO_0000194765" description="Glycogen [starch] synthase, muscle">
    <location>
        <begin position="1"/>
        <end position="738"/>
    </location>
</feature>
<feature type="region of interest" description="Disordered" evidence="6">
    <location>
        <begin position="632"/>
        <end position="738"/>
    </location>
</feature>
<feature type="compositionally biased region" description="Acidic residues" evidence="6">
    <location>
        <begin position="658"/>
        <end position="681"/>
    </location>
</feature>
<feature type="compositionally biased region" description="Basic and acidic residues" evidence="6">
    <location>
        <begin position="682"/>
        <end position="695"/>
    </location>
</feature>
<feature type="compositionally biased region" description="Low complexity" evidence="6">
    <location>
        <begin position="698"/>
        <end position="738"/>
    </location>
</feature>
<feature type="binding site" evidence="3">
    <location>
        <position position="39"/>
    </location>
    <ligand>
        <name>UDP</name>
        <dbReference type="ChEBI" id="CHEBI:58223"/>
    </ligand>
</feature>
<feature type="binding site" evidence="3">
    <location>
        <position position="205"/>
    </location>
    <ligand>
        <name>UDP-alpha-D-glucose</name>
        <dbReference type="ChEBI" id="CHEBI:58885"/>
    </ligand>
</feature>
<feature type="binding site" evidence="3">
    <location>
        <position position="211"/>
    </location>
    <ligand>
        <name>UDP-alpha-D-glucose</name>
        <dbReference type="ChEBI" id="CHEBI:58885"/>
    </ligand>
</feature>
<feature type="binding site" description="in other chain" evidence="3">
    <location>
        <position position="291"/>
    </location>
    <ligand>
        <name>alpha-D-glucose 6-phosphate</name>
        <dbReference type="ChEBI" id="CHEBI:58225"/>
        <note>allosteric activator; ligand shared between two neighboring subunits</note>
    </ligand>
</feature>
<feature type="binding site" description="in other chain" evidence="3">
    <location>
        <position position="292"/>
    </location>
    <ligand>
        <name>alpha-D-glucose 6-phosphate</name>
        <dbReference type="ChEBI" id="CHEBI:58225"/>
        <note>allosteric activator; ligand shared between two neighboring subunits</note>
    </ligand>
</feature>
<feature type="binding site" evidence="3">
    <location>
        <position position="294"/>
    </location>
    <ligand>
        <name>alpha-D-glucose 6-phosphate</name>
        <dbReference type="ChEBI" id="CHEBI:58225"/>
        <note>allosteric activator; ligand shared between two neighboring subunits</note>
    </ligand>
</feature>
<feature type="binding site" evidence="3">
    <location>
        <position position="297"/>
    </location>
    <ligand>
        <name>alpha-D-glucose 6-phosphate</name>
        <dbReference type="ChEBI" id="CHEBI:58225"/>
        <note>allosteric activator; ligand shared between two neighboring subunits</note>
    </ligand>
</feature>
<feature type="binding site" evidence="3">
    <location>
        <position position="301"/>
    </location>
    <ligand>
        <name>alpha-D-glucose 6-phosphate</name>
        <dbReference type="ChEBI" id="CHEBI:58225"/>
        <note>allosteric activator; ligand shared between two neighboring subunits</note>
    </ligand>
</feature>
<feature type="binding site" evidence="3">
    <location>
        <position position="331"/>
    </location>
    <ligand>
        <name>UDP</name>
        <dbReference type="ChEBI" id="CHEBI:58223"/>
    </ligand>
</feature>
<feature type="binding site" evidence="3">
    <location>
        <position position="331"/>
    </location>
    <ligand>
        <name>UDP-alpha-D-glucose</name>
        <dbReference type="ChEBI" id="CHEBI:58885"/>
    </ligand>
</feature>
<feature type="binding site" evidence="3">
    <location>
        <position position="501"/>
    </location>
    <ligand>
        <name>alpha-D-glucose 6-phosphate</name>
        <dbReference type="ChEBI" id="CHEBI:58225"/>
        <note>allosteric activator; ligand shared between two neighboring subunits</note>
    </ligand>
</feature>
<feature type="binding site" evidence="3">
    <location>
        <position position="510"/>
    </location>
    <ligand>
        <name>UDP-alpha-D-glucose</name>
        <dbReference type="ChEBI" id="CHEBI:58885"/>
    </ligand>
</feature>
<feature type="binding site" evidence="3">
    <location>
        <position position="512"/>
    </location>
    <ligand>
        <name>UDP-alpha-D-glucose</name>
        <dbReference type="ChEBI" id="CHEBI:58885"/>
    </ligand>
</feature>
<feature type="binding site" evidence="3">
    <location>
        <position position="513"/>
    </location>
    <ligand>
        <name>UDP-alpha-D-glucose</name>
        <dbReference type="ChEBI" id="CHEBI:58885"/>
    </ligand>
</feature>
<feature type="binding site" evidence="3">
    <location>
        <position position="515"/>
    </location>
    <ligand>
        <name>UDP</name>
        <dbReference type="ChEBI" id="CHEBI:58223"/>
    </ligand>
</feature>
<feature type="binding site" evidence="3">
    <location>
        <position position="582"/>
    </location>
    <ligand>
        <name>alpha-D-glucose 6-phosphate</name>
        <dbReference type="ChEBI" id="CHEBI:58225"/>
        <note>allosteric activator; ligand shared between two neighboring subunits</note>
    </ligand>
</feature>
<feature type="binding site" evidence="3">
    <location>
        <position position="586"/>
    </location>
    <ligand>
        <name>alpha-D-glucose 6-phosphate</name>
        <dbReference type="ChEBI" id="CHEBI:58225"/>
        <note>allosteric activator; ligand shared between two neighboring subunits</note>
    </ligand>
</feature>
<feature type="modified residue" description="Phosphoserine; by AMPK and PKA" evidence="7">
    <location>
        <position position="8"/>
    </location>
</feature>
<feature type="modified residue" description="Phosphoserine" evidence="4">
    <location>
        <position position="11"/>
    </location>
</feature>
<feature type="modified residue" description="Phosphoserine" evidence="9">
    <location>
        <position position="412"/>
    </location>
</feature>
<feature type="modified residue" description="Phosphoserine; by DYRK2, GSK3-alpha, GSK3-beta and PASK" evidence="4">
    <location>
        <position position="641"/>
    </location>
</feature>
<feature type="modified residue" description="Phosphoserine" evidence="9">
    <location>
        <position position="645"/>
    </location>
</feature>
<feature type="modified residue" description="Phosphoserine" evidence="9">
    <location>
        <position position="649"/>
    </location>
</feature>
<feature type="modified residue" description="Phosphoserine" evidence="2">
    <location>
        <position position="652"/>
    </location>
</feature>
<feature type="modified residue" description="Phosphoserine" evidence="9">
    <location>
        <position position="653"/>
    </location>
</feature>
<feature type="modified residue" description="Phosphoserine" evidence="9">
    <location>
        <position position="657"/>
    </location>
</feature>
<feature type="modified residue" description="Phosphoserine" evidence="9">
    <location>
        <position position="672"/>
    </location>
</feature>
<feature type="modified residue" description="Phosphoserine" evidence="4">
    <location>
        <position position="698"/>
    </location>
</feature>
<feature type="modified residue" description="Phosphoserine" evidence="9">
    <location>
        <position position="709"/>
    </location>
</feature>
<feature type="modified residue" description="Phosphoserine" evidence="3">
    <location>
        <position position="711"/>
    </location>
</feature>
<feature type="modified residue" description="Phosphothreonine" evidence="9">
    <location>
        <position position="722"/>
    </location>
</feature>
<feature type="modified residue" description="Phosphothreonine" evidence="9">
    <location>
        <position position="724"/>
    </location>
</feature>
<feature type="modified residue" description="Phosphoserine" evidence="9">
    <location>
        <position position="728"/>
    </location>
</feature>
<feature type="modified residue" description="Phosphoserine" evidence="3">
    <location>
        <position position="732"/>
    </location>
</feature>
<feature type="sequence conflict" description="In Ref. 1; CAA64322." evidence="8" ref="1">
    <original>L</original>
    <variation>R</variation>
    <location>
        <position position="3"/>
    </location>
</feature>
<feature type="sequence conflict" description="In Ref. 2; AAD09457." evidence="8" ref="2">
    <original>E</original>
    <variation>V</variation>
    <location>
        <position position="70"/>
    </location>
</feature>
<feature type="sequence conflict" description="In Ref. 3; BAE42275." evidence="8" ref="3">
    <original>L</original>
    <variation>M</variation>
    <location>
        <position position="80"/>
    </location>
</feature>
<feature type="sequence conflict" description="In Ref. 1; CAA64322." evidence="8" ref="1">
    <original>GP</original>
    <variation>D</variation>
    <location>
        <begin position="111"/>
        <end position="112"/>
    </location>
</feature>
<feature type="sequence conflict" description="In Ref. 2; AAD09457." evidence="8" ref="2">
    <original>G</original>
    <variation>A</variation>
    <location>
        <position position="120"/>
    </location>
</feature>
<feature type="sequence conflict" description="In Ref. 2; AAD09457." evidence="8" ref="2">
    <original>A</original>
    <variation>G</variation>
    <location>
        <position position="148"/>
    </location>
</feature>
<feature type="sequence conflict" description="In Ref. 2; AAD09457." evidence="8" ref="2">
    <original>FG</original>
    <variation>YS</variation>
    <location>
        <begin position="154"/>
        <end position="155"/>
    </location>
</feature>
<feature type="sequence conflict" description="In Ref. 1; CAA64322." evidence="8" ref="1">
    <original>C</original>
    <variation>S</variation>
    <location>
        <position position="191"/>
    </location>
</feature>
<feature type="sequence conflict" description="In Ref. 2; AAD09457." evidence="8" ref="2">
    <original>L</original>
    <variation>V</variation>
    <location>
        <position position="208"/>
    </location>
</feature>
<feature type="sequence conflict" description="In Ref. 2; AAD09457." evidence="8" ref="2">
    <original>N</original>
    <variation>I</variation>
    <location>
        <position position="228"/>
    </location>
</feature>
<feature type="sequence conflict" description="In Ref. 1; CAA64322." evidence="8" ref="1">
    <original>QR</original>
    <variation>HG</variation>
    <location>
        <begin position="581"/>
        <end position="582"/>
    </location>
</feature>
<feature type="sequence conflict" description="In Ref. 2; AAD09457." evidence="8" ref="2">
    <original>A</original>
    <variation>V</variation>
    <location>
        <position position="640"/>
    </location>
</feature>
<name>GYS1_MOUSE</name>
<proteinExistence type="evidence at protein level"/>
<reference key="1">
    <citation type="journal article" date="1996" name="Brain Res. Mol. Brain Res.">
        <title>Cloning, localization and induction of mouse brain glycogen synthase.</title>
        <authorList>
            <person name="Pellegri G."/>
            <person name="Rossier C."/>
            <person name="Magistretti P.J."/>
            <person name="Martin J.-L."/>
        </authorList>
    </citation>
    <scope>NUCLEOTIDE SEQUENCE [MRNA]</scope>
    <source>
        <strain>Swiss albino</strain>
        <tissue>Astrocyte</tissue>
    </source>
</reference>
<reference key="2">
    <citation type="submission" date="1996-04" db="EMBL/GenBank/DDBJ databases">
        <title>Mouse glycogen synthase gene.</title>
        <authorList>
            <person name="Seldin M.F."/>
            <person name="Xue Z."/>
            <person name="Rochelle J.M."/>
            <person name="DeBry R."/>
            <person name="Surwit R."/>
        </authorList>
    </citation>
    <scope>NUCLEOTIDE SEQUENCE [MRNA]</scope>
</reference>
<reference key="3">
    <citation type="journal article" date="2005" name="Science">
        <title>The transcriptional landscape of the mammalian genome.</title>
        <authorList>
            <person name="Carninci P."/>
            <person name="Kasukawa T."/>
            <person name="Katayama S."/>
            <person name="Gough J."/>
            <person name="Frith M.C."/>
            <person name="Maeda N."/>
            <person name="Oyama R."/>
            <person name="Ravasi T."/>
            <person name="Lenhard B."/>
            <person name="Wells C."/>
            <person name="Kodzius R."/>
            <person name="Shimokawa K."/>
            <person name="Bajic V.B."/>
            <person name="Brenner S.E."/>
            <person name="Batalov S."/>
            <person name="Forrest A.R."/>
            <person name="Zavolan M."/>
            <person name="Davis M.J."/>
            <person name="Wilming L.G."/>
            <person name="Aidinis V."/>
            <person name="Allen J.E."/>
            <person name="Ambesi-Impiombato A."/>
            <person name="Apweiler R."/>
            <person name="Aturaliya R.N."/>
            <person name="Bailey T.L."/>
            <person name="Bansal M."/>
            <person name="Baxter L."/>
            <person name="Beisel K.W."/>
            <person name="Bersano T."/>
            <person name="Bono H."/>
            <person name="Chalk A.M."/>
            <person name="Chiu K.P."/>
            <person name="Choudhary V."/>
            <person name="Christoffels A."/>
            <person name="Clutterbuck D.R."/>
            <person name="Crowe M.L."/>
            <person name="Dalla E."/>
            <person name="Dalrymple B.P."/>
            <person name="de Bono B."/>
            <person name="Della Gatta G."/>
            <person name="di Bernardo D."/>
            <person name="Down T."/>
            <person name="Engstrom P."/>
            <person name="Fagiolini M."/>
            <person name="Faulkner G."/>
            <person name="Fletcher C.F."/>
            <person name="Fukushima T."/>
            <person name="Furuno M."/>
            <person name="Futaki S."/>
            <person name="Gariboldi M."/>
            <person name="Georgii-Hemming P."/>
            <person name="Gingeras T.R."/>
            <person name="Gojobori T."/>
            <person name="Green R.E."/>
            <person name="Gustincich S."/>
            <person name="Harbers M."/>
            <person name="Hayashi Y."/>
            <person name="Hensch T.K."/>
            <person name="Hirokawa N."/>
            <person name="Hill D."/>
            <person name="Huminiecki L."/>
            <person name="Iacono M."/>
            <person name="Ikeo K."/>
            <person name="Iwama A."/>
            <person name="Ishikawa T."/>
            <person name="Jakt M."/>
            <person name="Kanapin A."/>
            <person name="Katoh M."/>
            <person name="Kawasawa Y."/>
            <person name="Kelso J."/>
            <person name="Kitamura H."/>
            <person name="Kitano H."/>
            <person name="Kollias G."/>
            <person name="Krishnan S.P."/>
            <person name="Kruger A."/>
            <person name="Kummerfeld S.K."/>
            <person name="Kurochkin I.V."/>
            <person name="Lareau L.F."/>
            <person name="Lazarevic D."/>
            <person name="Lipovich L."/>
            <person name="Liu J."/>
            <person name="Liuni S."/>
            <person name="McWilliam S."/>
            <person name="Madan Babu M."/>
            <person name="Madera M."/>
            <person name="Marchionni L."/>
            <person name="Matsuda H."/>
            <person name="Matsuzawa S."/>
            <person name="Miki H."/>
            <person name="Mignone F."/>
            <person name="Miyake S."/>
            <person name="Morris K."/>
            <person name="Mottagui-Tabar S."/>
            <person name="Mulder N."/>
            <person name="Nakano N."/>
            <person name="Nakauchi H."/>
            <person name="Ng P."/>
            <person name="Nilsson R."/>
            <person name="Nishiguchi S."/>
            <person name="Nishikawa S."/>
            <person name="Nori F."/>
            <person name="Ohara O."/>
            <person name="Okazaki Y."/>
            <person name="Orlando V."/>
            <person name="Pang K.C."/>
            <person name="Pavan W.J."/>
            <person name="Pavesi G."/>
            <person name="Pesole G."/>
            <person name="Petrovsky N."/>
            <person name="Piazza S."/>
            <person name="Reed J."/>
            <person name="Reid J.F."/>
            <person name="Ring B.Z."/>
            <person name="Ringwald M."/>
            <person name="Rost B."/>
            <person name="Ruan Y."/>
            <person name="Salzberg S.L."/>
            <person name="Sandelin A."/>
            <person name="Schneider C."/>
            <person name="Schoenbach C."/>
            <person name="Sekiguchi K."/>
            <person name="Semple C.A."/>
            <person name="Seno S."/>
            <person name="Sessa L."/>
            <person name="Sheng Y."/>
            <person name="Shibata Y."/>
            <person name="Shimada H."/>
            <person name="Shimada K."/>
            <person name="Silva D."/>
            <person name="Sinclair B."/>
            <person name="Sperling S."/>
            <person name="Stupka E."/>
            <person name="Sugiura K."/>
            <person name="Sultana R."/>
            <person name="Takenaka Y."/>
            <person name="Taki K."/>
            <person name="Tammoja K."/>
            <person name="Tan S.L."/>
            <person name="Tang S."/>
            <person name="Taylor M.S."/>
            <person name="Tegner J."/>
            <person name="Teichmann S.A."/>
            <person name="Ueda H.R."/>
            <person name="van Nimwegen E."/>
            <person name="Verardo R."/>
            <person name="Wei C.L."/>
            <person name="Yagi K."/>
            <person name="Yamanishi H."/>
            <person name="Zabarovsky E."/>
            <person name="Zhu S."/>
            <person name="Zimmer A."/>
            <person name="Hide W."/>
            <person name="Bult C."/>
            <person name="Grimmond S.M."/>
            <person name="Teasdale R.D."/>
            <person name="Liu E.T."/>
            <person name="Brusic V."/>
            <person name="Quackenbush J."/>
            <person name="Wahlestedt C."/>
            <person name="Mattick J.S."/>
            <person name="Hume D.A."/>
            <person name="Kai C."/>
            <person name="Sasaki D."/>
            <person name="Tomaru Y."/>
            <person name="Fukuda S."/>
            <person name="Kanamori-Katayama M."/>
            <person name="Suzuki M."/>
            <person name="Aoki J."/>
            <person name="Arakawa T."/>
            <person name="Iida J."/>
            <person name="Imamura K."/>
            <person name="Itoh M."/>
            <person name="Kato T."/>
            <person name="Kawaji H."/>
            <person name="Kawagashira N."/>
            <person name="Kawashima T."/>
            <person name="Kojima M."/>
            <person name="Kondo S."/>
            <person name="Konno H."/>
            <person name="Nakano K."/>
            <person name="Ninomiya N."/>
            <person name="Nishio T."/>
            <person name="Okada M."/>
            <person name="Plessy C."/>
            <person name="Shibata K."/>
            <person name="Shiraki T."/>
            <person name="Suzuki S."/>
            <person name="Tagami M."/>
            <person name="Waki K."/>
            <person name="Watahiki A."/>
            <person name="Okamura-Oho Y."/>
            <person name="Suzuki H."/>
            <person name="Kawai J."/>
            <person name="Hayashizaki Y."/>
        </authorList>
    </citation>
    <scope>NUCLEOTIDE SEQUENCE [LARGE SCALE MRNA]</scope>
    <source>
        <strain>C57BL/6J</strain>
        <strain>NOD</strain>
        <tissue>Dendritic cell</tissue>
        <tissue>Embryo</tissue>
    </source>
</reference>
<reference key="4">
    <citation type="submission" date="2005-07" db="EMBL/GenBank/DDBJ databases">
        <authorList>
            <person name="Mural R.J."/>
            <person name="Adams M.D."/>
            <person name="Myers E.W."/>
            <person name="Smith H.O."/>
            <person name="Venter J.C."/>
        </authorList>
    </citation>
    <scope>NUCLEOTIDE SEQUENCE [LARGE SCALE GENOMIC DNA]</scope>
</reference>
<reference key="5">
    <citation type="journal article" date="2004" name="Genome Res.">
        <title>The status, quality, and expansion of the NIH full-length cDNA project: the Mammalian Gene Collection (MGC).</title>
        <authorList>
            <consortium name="The MGC Project Team"/>
        </authorList>
    </citation>
    <scope>NUCLEOTIDE SEQUENCE [LARGE SCALE MRNA]</scope>
    <source>
        <strain>Czech II</strain>
        <tissue>Mammary tumor</tissue>
    </source>
</reference>
<reference key="6">
    <citation type="journal article" date="2004" name="Diabetes">
        <title>The alpha2-5'AMP-activated protein kinase is a site 2 glycogen synthase kinase in skeletal muscle and is responsive to glucose loading.</title>
        <authorList>
            <person name="Jorgensen S.B."/>
            <person name="Nielsen J.N."/>
            <person name="Birk J.B."/>
            <person name="Olsen G.S."/>
            <person name="Viollet B."/>
            <person name="Andreelli F."/>
            <person name="Schjerling P."/>
            <person name="Vaulont S."/>
            <person name="Hardie D.G."/>
            <person name="Hansen B.F."/>
            <person name="Richter E.A."/>
            <person name="Wojtaszewski J.F."/>
        </authorList>
    </citation>
    <scope>PHOSPHORYLATION AT SER-8</scope>
</reference>
<reference key="7">
    <citation type="journal article" date="2010" name="Cell">
        <title>A tissue-specific atlas of mouse protein phosphorylation and expression.</title>
        <authorList>
            <person name="Huttlin E.L."/>
            <person name="Jedrychowski M.P."/>
            <person name="Elias J.E."/>
            <person name="Goswami T."/>
            <person name="Rad R."/>
            <person name="Beausoleil S.A."/>
            <person name="Villen J."/>
            <person name="Haas W."/>
            <person name="Sowa M.E."/>
            <person name="Gygi S.P."/>
        </authorList>
    </citation>
    <scope>PHOSPHORYLATION [LARGE SCALE ANALYSIS] AT SER-412; SER-645; SER-649; SER-653; SER-657; SER-672; SER-709; THR-722; THR-724 AND SER-728</scope>
    <scope>IDENTIFICATION BY MASS SPECTROMETRY [LARGE SCALE ANALYSIS]</scope>
    <source>
        <tissue>Brain</tissue>
        <tissue>Brown adipose tissue</tissue>
        <tissue>Heart</tissue>
        <tissue>Kidney</tissue>
        <tissue>Lung</tissue>
        <tissue>Pancreas</tissue>
    </source>
</reference>
<gene>
    <name type="primary">Gys1</name>
    <name type="synonym">Gys</name>
    <name type="synonym">Gys3</name>
</gene>
<accession>Q9Z1E4</accession>
<accession>P54859</accession>
<accession>Q3TBN4</accession>
<accession>Q8BQG4</accession>
<accession>Q8VEB0</accession>
<protein>
    <recommendedName>
        <fullName>Glycogen [starch] synthase, muscle</fullName>
        <ecNumber evidence="3">2.4.1.11</ecNumber>
    </recommendedName>
    <alternativeName>
        <fullName evidence="3">Glycogen synthase 1</fullName>
    </alternativeName>
</protein>
<keyword id="KW-0021">Allosteric enzyme</keyword>
<keyword id="KW-0320">Glycogen biosynthesis</keyword>
<keyword id="KW-0328">Glycosyltransferase</keyword>
<keyword id="KW-0597">Phosphoprotein</keyword>
<keyword id="KW-1185">Reference proteome</keyword>
<keyword id="KW-0808">Transferase</keyword>
<comment type="function">
    <text evidence="3">Glycogen synthase participates in the glycogen biosynthetic process along with glycogenin and glycogen branching enzyme. Extends the primer composed of a few glucose units formed by glycogenin by adding new glucose units to it. In this context, glycogen synthase transfers the glycosyl residue from UDP-Glc to the non-reducing end of alpha-1,4-glucan.</text>
</comment>
<comment type="catalytic activity">
    <reaction evidence="3">
        <text>[(1-&gt;4)-alpha-D-glucosyl](n) + UDP-alpha-D-glucose = [(1-&gt;4)-alpha-D-glucosyl](n+1) + UDP + H(+)</text>
        <dbReference type="Rhea" id="RHEA:18549"/>
        <dbReference type="Rhea" id="RHEA-COMP:9584"/>
        <dbReference type="Rhea" id="RHEA-COMP:9587"/>
        <dbReference type="ChEBI" id="CHEBI:15378"/>
        <dbReference type="ChEBI" id="CHEBI:15444"/>
        <dbReference type="ChEBI" id="CHEBI:58223"/>
        <dbReference type="ChEBI" id="CHEBI:58885"/>
        <dbReference type="EC" id="2.4.1.11"/>
    </reaction>
    <physiologicalReaction direction="left-to-right" evidence="3">
        <dbReference type="Rhea" id="RHEA:18550"/>
    </physiologicalReaction>
</comment>
<comment type="activity regulation">
    <text evidence="4 5">Allosteric activation by glucose-6-phosphate. Phosphorylation reduces the activity towards UDP-glucose. When in the non-phosphorylated state, glycogen synthase does not require glucose-6-phosphate as an allosteric activator; when phosphorylated it does (By similarity).</text>
</comment>
<comment type="pathway">
    <text evidence="3">Glycan biosynthesis; glycogen biosynthesis.</text>
</comment>
<comment type="subunit">
    <text evidence="3">Part of the GYS1-GYG1 complex, a heterooctamer composed of a tetramer of GYS1 and 2 dimers of GYG1, where each GYS1 protomer binds to one GYG1 subunit (via GYG1 C-terminus); the GYS1 tetramer may dissociate from GYG1 dimers to continue glycogen polymerization on its own.</text>
</comment>
<comment type="PTM">
    <text evidence="1 7">Primed phosphorylation at Ser-657 (site 5) by CSNK2A1 and CSNK2A2 is required for inhibitory phosphorylation at Ser-641 (site 3a), Ser-645 (site 3b), Ser-649 (site 3c) and Ser-653 (site 4) by GSK3A an GSK3B. Phosphorylated at Ser-641 by PASK, leading to inactivation; phosphorylation by PASK is inhibited by glycogen. Phosphorylated at Ser-641 by DYRK2, leading to inactivation. Dephosphorylation at Ser-641 and Ser-645 by PP1 activates the enzyme (By similarity). Phosphorylation at Ser-8 by AMPK inactivates the enzyme activity.</text>
</comment>
<comment type="similarity">
    <text evidence="8">Belongs to the glycosyltransferase 3 family.</text>
</comment>